<keyword id="KW-0963">Cytoplasm</keyword>
<keyword id="KW-0378">Hydrolase</keyword>
<keyword id="KW-0464">Manganese</keyword>
<keyword id="KW-0479">Metal-binding</keyword>
<evidence type="ECO:0000255" key="1">
    <source>
        <dbReference type="HAMAP-Rule" id="MF_00207"/>
    </source>
</evidence>
<name>PPAC_LISMH</name>
<proteinExistence type="inferred from homology"/>
<gene>
    <name evidence="1" type="primary">ppaC</name>
    <name type="ordered locus">LMHCC_1121</name>
</gene>
<protein>
    <recommendedName>
        <fullName evidence="1">Probable manganese-dependent inorganic pyrophosphatase</fullName>
        <ecNumber evidence="1">3.6.1.1</ecNumber>
    </recommendedName>
    <alternativeName>
        <fullName evidence="1">Pyrophosphate phospho-hydrolase</fullName>
        <shortName evidence="1">PPase</shortName>
    </alternativeName>
</protein>
<reference key="1">
    <citation type="journal article" date="2011" name="J. Bacteriol.">
        <title>Genome sequence of lineage III Listeria monocytogenes strain HCC23.</title>
        <authorList>
            <person name="Steele C.L."/>
            <person name="Donaldson J.R."/>
            <person name="Paul D."/>
            <person name="Banes M.M."/>
            <person name="Arick T."/>
            <person name="Bridges S.M."/>
            <person name="Lawrence M.L."/>
        </authorList>
    </citation>
    <scope>NUCLEOTIDE SEQUENCE [LARGE SCALE GENOMIC DNA]</scope>
    <source>
        <strain>HCC23</strain>
    </source>
</reference>
<dbReference type="EC" id="3.6.1.1" evidence="1"/>
<dbReference type="EMBL" id="CP001175">
    <property type="protein sequence ID" value="ACK39469.1"/>
    <property type="molecule type" value="Genomic_DNA"/>
</dbReference>
<dbReference type="RefSeq" id="WP_012581315.1">
    <property type="nucleotide sequence ID" value="NC_011660.1"/>
</dbReference>
<dbReference type="SMR" id="B8DE62"/>
<dbReference type="KEGG" id="lmh:LMHCC_1121"/>
<dbReference type="HOGENOM" id="CLU_025243_0_1_9"/>
<dbReference type="GO" id="GO:0005737">
    <property type="term" value="C:cytoplasm"/>
    <property type="evidence" value="ECO:0007669"/>
    <property type="project" value="UniProtKB-SubCell"/>
</dbReference>
<dbReference type="GO" id="GO:0004427">
    <property type="term" value="F:inorganic diphosphate phosphatase activity"/>
    <property type="evidence" value="ECO:0007669"/>
    <property type="project" value="UniProtKB-UniRule"/>
</dbReference>
<dbReference type="GO" id="GO:0030145">
    <property type="term" value="F:manganese ion binding"/>
    <property type="evidence" value="ECO:0007669"/>
    <property type="project" value="UniProtKB-UniRule"/>
</dbReference>
<dbReference type="FunFam" id="3.10.310.20:FF:000001">
    <property type="entry name" value="Probable manganese-dependent inorganic pyrophosphatase"/>
    <property type="match status" value="1"/>
</dbReference>
<dbReference type="FunFam" id="3.90.1640.10:FF:000001">
    <property type="entry name" value="Probable manganese-dependent inorganic pyrophosphatase"/>
    <property type="match status" value="1"/>
</dbReference>
<dbReference type="Gene3D" id="3.10.310.20">
    <property type="entry name" value="DHHA2 domain"/>
    <property type="match status" value="1"/>
</dbReference>
<dbReference type="Gene3D" id="3.90.1640.10">
    <property type="entry name" value="inorganic pyrophosphatase (n-terminal core)"/>
    <property type="match status" value="1"/>
</dbReference>
<dbReference type="HAMAP" id="MF_00207">
    <property type="entry name" value="PPase_C"/>
    <property type="match status" value="1"/>
</dbReference>
<dbReference type="InterPro" id="IPR001667">
    <property type="entry name" value="DDH_dom"/>
</dbReference>
<dbReference type="InterPro" id="IPR038763">
    <property type="entry name" value="DHH_sf"/>
</dbReference>
<dbReference type="InterPro" id="IPR004097">
    <property type="entry name" value="DHHA2"/>
</dbReference>
<dbReference type="InterPro" id="IPR038222">
    <property type="entry name" value="DHHA2_dom_sf"/>
</dbReference>
<dbReference type="InterPro" id="IPR022934">
    <property type="entry name" value="Mn-dep_inorganic_PyrPase"/>
</dbReference>
<dbReference type="NCBIfam" id="NF003877">
    <property type="entry name" value="PRK05427.1"/>
    <property type="match status" value="1"/>
</dbReference>
<dbReference type="PANTHER" id="PTHR12112">
    <property type="entry name" value="BNIP - RELATED"/>
    <property type="match status" value="1"/>
</dbReference>
<dbReference type="PANTHER" id="PTHR12112:SF22">
    <property type="entry name" value="MANGANESE-DEPENDENT INORGANIC PYROPHOSPHATASE-RELATED"/>
    <property type="match status" value="1"/>
</dbReference>
<dbReference type="Pfam" id="PF01368">
    <property type="entry name" value="DHH"/>
    <property type="match status" value="1"/>
</dbReference>
<dbReference type="Pfam" id="PF02833">
    <property type="entry name" value="DHHA2"/>
    <property type="match status" value="1"/>
</dbReference>
<dbReference type="SMART" id="SM01131">
    <property type="entry name" value="DHHA2"/>
    <property type="match status" value="1"/>
</dbReference>
<dbReference type="SUPFAM" id="SSF64182">
    <property type="entry name" value="DHH phosphoesterases"/>
    <property type="match status" value="1"/>
</dbReference>
<sequence length="308" mass="33775">MTKTLVFGHKNPDTDTICSAISYAELKKAQGADIEAVRLGELNSETAFVLDYFQVTAPRLVQTVANEVSEVALVDHNERQQSVDDIDDVTVTAVVDHHRIANFETSDPLYYRAEPVGCTTTILLKMFRENEVEVSKTVAGLMLSAIISDTLLFQSPTCTEEDKVAAQKLAQIADVEIQSYGMEMLKAGADVSKKTVAELLLDAKEFNMNDNKVEIAQINVVDVNDVLSRRAEVEALMTQNIVDKGLDLYLFVITNILTNDSVGIAIGSKTAVVEEAYGVKFVENQAPLKGVVSRKKQVVPILTDTFAK</sequence>
<comment type="catalytic activity">
    <reaction evidence="1">
        <text>diphosphate + H2O = 2 phosphate + H(+)</text>
        <dbReference type="Rhea" id="RHEA:24576"/>
        <dbReference type="ChEBI" id="CHEBI:15377"/>
        <dbReference type="ChEBI" id="CHEBI:15378"/>
        <dbReference type="ChEBI" id="CHEBI:33019"/>
        <dbReference type="ChEBI" id="CHEBI:43474"/>
        <dbReference type="EC" id="3.6.1.1"/>
    </reaction>
</comment>
<comment type="cofactor">
    <cofactor evidence="1">
        <name>Mn(2+)</name>
        <dbReference type="ChEBI" id="CHEBI:29035"/>
    </cofactor>
    <text evidence="1">Binds 2 manganese ions per subunit.</text>
</comment>
<comment type="subcellular location">
    <subcellularLocation>
        <location evidence="1">Cytoplasm</location>
    </subcellularLocation>
</comment>
<comment type="similarity">
    <text evidence="1">Belongs to the PPase class C family.</text>
</comment>
<feature type="chain" id="PRO_1000124656" description="Probable manganese-dependent inorganic pyrophosphatase">
    <location>
        <begin position="1"/>
        <end position="308"/>
    </location>
</feature>
<feature type="binding site" evidence="1">
    <location>
        <position position="9"/>
    </location>
    <ligand>
        <name>Mn(2+)</name>
        <dbReference type="ChEBI" id="CHEBI:29035"/>
        <label>1</label>
    </ligand>
</feature>
<feature type="binding site" evidence="1">
    <location>
        <position position="13"/>
    </location>
    <ligand>
        <name>Mn(2+)</name>
        <dbReference type="ChEBI" id="CHEBI:29035"/>
        <label>1</label>
    </ligand>
</feature>
<feature type="binding site" evidence="1">
    <location>
        <position position="15"/>
    </location>
    <ligand>
        <name>Mn(2+)</name>
        <dbReference type="ChEBI" id="CHEBI:29035"/>
        <label>2</label>
    </ligand>
</feature>
<feature type="binding site" evidence="1">
    <location>
        <position position="75"/>
    </location>
    <ligand>
        <name>Mn(2+)</name>
        <dbReference type="ChEBI" id="CHEBI:29035"/>
        <label>1</label>
    </ligand>
</feature>
<feature type="binding site" evidence="1">
    <location>
        <position position="75"/>
    </location>
    <ligand>
        <name>Mn(2+)</name>
        <dbReference type="ChEBI" id="CHEBI:29035"/>
        <label>2</label>
    </ligand>
</feature>
<feature type="binding site" evidence="1">
    <location>
        <position position="97"/>
    </location>
    <ligand>
        <name>Mn(2+)</name>
        <dbReference type="ChEBI" id="CHEBI:29035"/>
        <label>2</label>
    </ligand>
</feature>
<feature type="binding site" evidence="1">
    <location>
        <position position="149"/>
    </location>
    <ligand>
        <name>Mn(2+)</name>
        <dbReference type="ChEBI" id="CHEBI:29035"/>
        <label>2</label>
    </ligand>
</feature>
<accession>B8DE62</accession>
<organism>
    <name type="scientific">Listeria monocytogenes serotype 4a (strain HCC23)</name>
    <dbReference type="NCBI Taxonomy" id="552536"/>
    <lineage>
        <taxon>Bacteria</taxon>
        <taxon>Bacillati</taxon>
        <taxon>Bacillota</taxon>
        <taxon>Bacilli</taxon>
        <taxon>Bacillales</taxon>
        <taxon>Listeriaceae</taxon>
        <taxon>Listeria</taxon>
    </lineage>
</organism>